<feature type="chain" id="PRO_0000383285" description="Nucleotide-binding protein Sare_3328">
    <location>
        <begin position="1"/>
        <end position="295"/>
    </location>
</feature>
<feature type="binding site" evidence="1">
    <location>
        <begin position="19"/>
        <end position="26"/>
    </location>
    <ligand>
        <name>ATP</name>
        <dbReference type="ChEBI" id="CHEBI:30616"/>
    </ligand>
</feature>
<feature type="binding site" evidence="1">
    <location>
        <begin position="70"/>
        <end position="73"/>
    </location>
    <ligand>
        <name>GTP</name>
        <dbReference type="ChEBI" id="CHEBI:37565"/>
    </ligand>
</feature>
<reference key="1">
    <citation type="submission" date="2007-10" db="EMBL/GenBank/DDBJ databases">
        <title>Complete sequence of Salinispora arenicola CNS-205.</title>
        <authorList>
            <consortium name="US DOE Joint Genome Institute"/>
            <person name="Copeland A."/>
            <person name="Lucas S."/>
            <person name="Lapidus A."/>
            <person name="Barry K."/>
            <person name="Glavina del Rio T."/>
            <person name="Dalin E."/>
            <person name="Tice H."/>
            <person name="Pitluck S."/>
            <person name="Foster B."/>
            <person name="Schmutz J."/>
            <person name="Larimer F."/>
            <person name="Land M."/>
            <person name="Hauser L."/>
            <person name="Kyrpides N."/>
            <person name="Ivanova N."/>
            <person name="Jensen P.R."/>
            <person name="Moore B.S."/>
            <person name="Penn K."/>
            <person name="Jenkins C."/>
            <person name="Udwary D."/>
            <person name="Xiang L."/>
            <person name="Gontang E."/>
            <person name="Richardson P."/>
        </authorList>
    </citation>
    <scope>NUCLEOTIDE SEQUENCE [LARGE SCALE GENOMIC DNA]</scope>
    <source>
        <strain>CNS-205</strain>
    </source>
</reference>
<accession>A8LW22</accession>
<gene>
    <name type="ordered locus">Sare_3328</name>
</gene>
<dbReference type="EMBL" id="CP000850">
    <property type="protein sequence ID" value="ABV99131.1"/>
    <property type="molecule type" value="Genomic_DNA"/>
</dbReference>
<dbReference type="SMR" id="A8LW22"/>
<dbReference type="STRING" id="391037.Sare_3328"/>
<dbReference type="KEGG" id="saq:Sare_3328"/>
<dbReference type="eggNOG" id="COG1660">
    <property type="taxonomic scope" value="Bacteria"/>
</dbReference>
<dbReference type="HOGENOM" id="CLU_059558_0_0_11"/>
<dbReference type="GO" id="GO:0005524">
    <property type="term" value="F:ATP binding"/>
    <property type="evidence" value="ECO:0007669"/>
    <property type="project" value="UniProtKB-UniRule"/>
</dbReference>
<dbReference type="GO" id="GO:0005525">
    <property type="term" value="F:GTP binding"/>
    <property type="evidence" value="ECO:0007669"/>
    <property type="project" value="UniProtKB-UniRule"/>
</dbReference>
<dbReference type="Gene3D" id="3.40.50.300">
    <property type="entry name" value="P-loop containing nucleotide triphosphate hydrolases"/>
    <property type="match status" value="1"/>
</dbReference>
<dbReference type="HAMAP" id="MF_00636">
    <property type="entry name" value="RapZ_like"/>
    <property type="match status" value="1"/>
</dbReference>
<dbReference type="InterPro" id="IPR027417">
    <property type="entry name" value="P-loop_NTPase"/>
</dbReference>
<dbReference type="InterPro" id="IPR005337">
    <property type="entry name" value="RapZ-like"/>
</dbReference>
<dbReference type="InterPro" id="IPR053930">
    <property type="entry name" value="RapZ-like_N"/>
</dbReference>
<dbReference type="InterPro" id="IPR053931">
    <property type="entry name" value="RapZ_C"/>
</dbReference>
<dbReference type="NCBIfam" id="NF003828">
    <property type="entry name" value="PRK05416.1"/>
    <property type="match status" value="1"/>
</dbReference>
<dbReference type="PANTHER" id="PTHR30448">
    <property type="entry name" value="RNASE ADAPTER PROTEIN RAPZ"/>
    <property type="match status" value="1"/>
</dbReference>
<dbReference type="PANTHER" id="PTHR30448:SF0">
    <property type="entry name" value="RNASE ADAPTER PROTEIN RAPZ"/>
    <property type="match status" value="1"/>
</dbReference>
<dbReference type="Pfam" id="PF22740">
    <property type="entry name" value="PapZ_C"/>
    <property type="match status" value="1"/>
</dbReference>
<dbReference type="Pfam" id="PF03668">
    <property type="entry name" value="RapZ-like_N"/>
    <property type="match status" value="1"/>
</dbReference>
<dbReference type="PIRSF" id="PIRSF005052">
    <property type="entry name" value="P-loopkin"/>
    <property type="match status" value="1"/>
</dbReference>
<dbReference type="SUPFAM" id="SSF52540">
    <property type="entry name" value="P-loop containing nucleoside triphosphate hydrolases"/>
    <property type="match status" value="1"/>
</dbReference>
<name>Y3328_SALAI</name>
<organism>
    <name type="scientific">Salinispora arenicola (strain CNS-205)</name>
    <dbReference type="NCBI Taxonomy" id="391037"/>
    <lineage>
        <taxon>Bacteria</taxon>
        <taxon>Bacillati</taxon>
        <taxon>Actinomycetota</taxon>
        <taxon>Actinomycetes</taxon>
        <taxon>Micromonosporales</taxon>
        <taxon>Micromonosporaceae</taxon>
        <taxon>Salinispora</taxon>
    </lineage>
</organism>
<comment type="function">
    <text evidence="1">Displays ATPase and GTPase activities.</text>
</comment>
<comment type="similarity">
    <text evidence="1">Belongs to the RapZ-like family.</text>
</comment>
<protein>
    <recommendedName>
        <fullName evidence="1">Nucleotide-binding protein Sare_3328</fullName>
    </recommendedName>
</protein>
<keyword id="KW-0067">ATP-binding</keyword>
<keyword id="KW-0342">GTP-binding</keyword>
<keyword id="KW-0547">Nucleotide-binding</keyword>
<evidence type="ECO:0000255" key="1">
    <source>
        <dbReference type="HAMAP-Rule" id="MF_00636"/>
    </source>
</evidence>
<proteinExistence type="inferred from homology"/>
<sequence length="295" mass="32124">MPSGSDLSDTDTTLVVVTGVSGGGRSTVARALENVGYYVVDNLPQALMLDMAELAMKAGGAARRTAMVLDVRSRAFSTDLVGAIRELKERGFAPWVVFVDADDEVLIRRFESVRRSHPLQGEGRLADGIAVERGLLEGARDQADVIVDTSHLNVNQLRRRIEELFGAEDARRLRVTVVSFGFKYGVPPDADFVCDARFLPNPYWVPELREHTGQTEAVSSYVLGQEGAEAFVATYTDLINATTAGFEREGKRYLTVAVGCTGGKHRSVAIAEELAARLGRTVIAANTQHRDLGRE</sequence>